<keyword id="KW-0433">Leucine-rich repeat</keyword>
<keyword id="KW-1185">Reference proteome</keyword>
<keyword id="KW-0677">Repeat</keyword>
<feature type="chain" id="PRO_0000254047" description="Leucine-rich repeat-containing protein 75B">
    <location>
        <begin position="1"/>
        <end position="306"/>
    </location>
</feature>
<feature type="repeat" description="LRR 1">
    <location>
        <begin position="173"/>
        <end position="186"/>
    </location>
</feature>
<feature type="repeat" description="LRR 2">
    <location>
        <begin position="198"/>
        <end position="211"/>
    </location>
</feature>
<feature type="region of interest" description="Disordered" evidence="1">
    <location>
        <begin position="1"/>
        <end position="22"/>
    </location>
</feature>
<feature type="compositionally biased region" description="Low complexity" evidence="1">
    <location>
        <begin position="12"/>
        <end position="22"/>
    </location>
</feature>
<reference key="1">
    <citation type="journal article" date="2004" name="Genome Res.">
        <title>The status, quality, and expansion of the NIH full-length cDNA project: the Mammalian Gene Collection (MGC).</title>
        <authorList>
            <consortium name="The MGC Project Team"/>
        </authorList>
    </citation>
    <scope>NUCLEOTIDE SEQUENCE [LARGE SCALE MRNA]</scope>
    <source>
        <strain>C57BL/6J</strain>
        <tissue>Brain</tissue>
    </source>
</reference>
<reference key="2">
    <citation type="journal article" date="2005" name="Science">
        <title>The transcriptional landscape of the mammalian genome.</title>
        <authorList>
            <person name="Carninci P."/>
            <person name="Kasukawa T."/>
            <person name="Katayama S."/>
            <person name="Gough J."/>
            <person name="Frith M.C."/>
            <person name="Maeda N."/>
            <person name="Oyama R."/>
            <person name="Ravasi T."/>
            <person name="Lenhard B."/>
            <person name="Wells C."/>
            <person name="Kodzius R."/>
            <person name="Shimokawa K."/>
            <person name="Bajic V.B."/>
            <person name="Brenner S.E."/>
            <person name="Batalov S."/>
            <person name="Forrest A.R."/>
            <person name="Zavolan M."/>
            <person name="Davis M.J."/>
            <person name="Wilming L.G."/>
            <person name="Aidinis V."/>
            <person name="Allen J.E."/>
            <person name="Ambesi-Impiombato A."/>
            <person name="Apweiler R."/>
            <person name="Aturaliya R.N."/>
            <person name="Bailey T.L."/>
            <person name="Bansal M."/>
            <person name="Baxter L."/>
            <person name="Beisel K.W."/>
            <person name="Bersano T."/>
            <person name="Bono H."/>
            <person name="Chalk A.M."/>
            <person name="Chiu K.P."/>
            <person name="Choudhary V."/>
            <person name="Christoffels A."/>
            <person name="Clutterbuck D.R."/>
            <person name="Crowe M.L."/>
            <person name="Dalla E."/>
            <person name="Dalrymple B.P."/>
            <person name="de Bono B."/>
            <person name="Della Gatta G."/>
            <person name="di Bernardo D."/>
            <person name="Down T."/>
            <person name="Engstrom P."/>
            <person name="Fagiolini M."/>
            <person name="Faulkner G."/>
            <person name="Fletcher C.F."/>
            <person name="Fukushima T."/>
            <person name="Furuno M."/>
            <person name="Futaki S."/>
            <person name="Gariboldi M."/>
            <person name="Georgii-Hemming P."/>
            <person name="Gingeras T.R."/>
            <person name="Gojobori T."/>
            <person name="Green R.E."/>
            <person name="Gustincich S."/>
            <person name="Harbers M."/>
            <person name="Hayashi Y."/>
            <person name="Hensch T.K."/>
            <person name="Hirokawa N."/>
            <person name="Hill D."/>
            <person name="Huminiecki L."/>
            <person name="Iacono M."/>
            <person name="Ikeo K."/>
            <person name="Iwama A."/>
            <person name="Ishikawa T."/>
            <person name="Jakt M."/>
            <person name="Kanapin A."/>
            <person name="Katoh M."/>
            <person name="Kawasawa Y."/>
            <person name="Kelso J."/>
            <person name="Kitamura H."/>
            <person name="Kitano H."/>
            <person name="Kollias G."/>
            <person name="Krishnan S.P."/>
            <person name="Kruger A."/>
            <person name="Kummerfeld S.K."/>
            <person name="Kurochkin I.V."/>
            <person name="Lareau L.F."/>
            <person name="Lazarevic D."/>
            <person name="Lipovich L."/>
            <person name="Liu J."/>
            <person name="Liuni S."/>
            <person name="McWilliam S."/>
            <person name="Madan Babu M."/>
            <person name="Madera M."/>
            <person name="Marchionni L."/>
            <person name="Matsuda H."/>
            <person name="Matsuzawa S."/>
            <person name="Miki H."/>
            <person name="Mignone F."/>
            <person name="Miyake S."/>
            <person name="Morris K."/>
            <person name="Mottagui-Tabar S."/>
            <person name="Mulder N."/>
            <person name="Nakano N."/>
            <person name="Nakauchi H."/>
            <person name="Ng P."/>
            <person name="Nilsson R."/>
            <person name="Nishiguchi S."/>
            <person name="Nishikawa S."/>
            <person name="Nori F."/>
            <person name="Ohara O."/>
            <person name="Okazaki Y."/>
            <person name="Orlando V."/>
            <person name="Pang K.C."/>
            <person name="Pavan W.J."/>
            <person name="Pavesi G."/>
            <person name="Pesole G."/>
            <person name="Petrovsky N."/>
            <person name="Piazza S."/>
            <person name="Reed J."/>
            <person name="Reid J.F."/>
            <person name="Ring B.Z."/>
            <person name="Ringwald M."/>
            <person name="Rost B."/>
            <person name="Ruan Y."/>
            <person name="Salzberg S.L."/>
            <person name="Sandelin A."/>
            <person name="Schneider C."/>
            <person name="Schoenbach C."/>
            <person name="Sekiguchi K."/>
            <person name="Semple C.A."/>
            <person name="Seno S."/>
            <person name="Sessa L."/>
            <person name="Sheng Y."/>
            <person name="Shibata Y."/>
            <person name="Shimada H."/>
            <person name="Shimada K."/>
            <person name="Silva D."/>
            <person name="Sinclair B."/>
            <person name="Sperling S."/>
            <person name="Stupka E."/>
            <person name="Sugiura K."/>
            <person name="Sultana R."/>
            <person name="Takenaka Y."/>
            <person name="Taki K."/>
            <person name="Tammoja K."/>
            <person name="Tan S.L."/>
            <person name="Tang S."/>
            <person name="Taylor M.S."/>
            <person name="Tegner J."/>
            <person name="Teichmann S.A."/>
            <person name="Ueda H.R."/>
            <person name="van Nimwegen E."/>
            <person name="Verardo R."/>
            <person name="Wei C.L."/>
            <person name="Yagi K."/>
            <person name="Yamanishi H."/>
            <person name="Zabarovsky E."/>
            <person name="Zhu S."/>
            <person name="Zimmer A."/>
            <person name="Hide W."/>
            <person name="Bult C."/>
            <person name="Grimmond S.M."/>
            <person name="Teasdale R.D."/>
            <person name="Liu E.T."/>
            <person name="Brusic V."/>
            <person name="Quackenbush J."/>
            <person name="Wahlestedt C."/>
            <person name="Mattick J.S."/>
            <person name="Hume D.A."/>
            <person name="Kai C."/>
            <person name="Sasaki D."/>
            <person name="Tomaru Y."/>
            <person name="Fukuda S."/>
            <person name="Kanamori-Katayama M."/>
            <person name="Suzuki M."/>
            <person name="Aoki J."/>
            <person name="Arakawa T."/>
            <person name="Iida J."/>
            <person name="Imamura K."/>
            <person name="Itoh M."/>
            <person name="Kato T."/>
            <person name="Kawaji H."/>
            <person name="Kawagashira N."/>
            <person name="Kawashima T."/>
            <person name="Kojima M."/>
            <person name="Kondo S."/>
            <person name="Konno H."/>
            <person name="Nakano K."/>
            <person name="Ninomiya N."/>
            <person name="Nishio T."/>
            <person name="Okada M."/>
            <person name="Plessy C."/>
            <person name="Shibata K."/>
            <person name="Shiraki T."/>
            <person name="Suzuki S."/>
            <person name="Tagami M."/>
            <person name="Waki K."/>
            <person name="Watahiki A."/>
            <person name="Okamura-Oho Y."/>
            <person name="Suzuki H."/>
            <person name="Kawai J."/>
            <person name="Hayashizaki Y."/>
        </authorList>
    </citation>
    <scope>NUCLEOTIDE SEQUENCE [LARGE SCALE MRNA] OF 24-306</scope>
    <source>
        <strain>C57BL/6J</strain>
        <tissue>Head</tissue>
    </source>
</reference>
<reference key="3">
    <citation type="journal article" date="2016" name="Int. J. Mol. Med.">
        <title>Lrrc75b is a novel negative regulator of C2C12 myogenic differentiation.</title>
        <authorList>
            <person name="Zhong Y."/>
            <person name="Zou L."/>
            <person name="Wang Z."/>
            <person name="Pan Y."/>
            <person name="Dai Z."/>
            <person name="Liu X."/>
            <person name="Cui L."/>
            <person name="Zuo C."/>
        </authorList>
    </citation>
    <scope>FUNCTION</scope>
    <scope>INDUCTION</scope>
</reference>
<accession>Q7TPD7</accession>
<accession>Q3V1Q4</accession>
<gene>
    <name evidence="4" type="primary">Lrrc75b</name>
    <name type="synonym">Fam211b</name>
</gene>
<organism>
    <name type="scientific">Mus musculus</name>
    <name type="common">Mouse</name>
    <dbReference type="NCBI Taxonomy" id="10090"/>
    <lineage>
        <taxon>Eukaryota</taxon>
        <taxon>Metazoa</taxon>
        <taxon>Chordata</taxon>
        <taxon>Craniata</taxon>
        <taxon>Vertebrata</taxon>
        <taxon>Euteleostomi</taxon>
        <taxon>Mammalia</taxon>
        <taxon>Eutheria</taxon>
        <taxon>Euarchontoglires</taxon>
        <taxon>Glires</taxon>
        <taxon>Rodentia</taxon>
        <taxon>Myomorpha</taxon>
        <taxon>Muroidea</taxon>
        <taxon>Muridae</taxon>
        <taxon>Murinae</taxon>
        <taxon>Mus</taxon>
        <taxon>Mus</taxon>
    </lineage>
</organism>
<evidence type="ECO:0000256" key="1">
    <source>
        <dbReference type="SAM" id="MobiDB-lite"/>
    </source>
</evidence>
<evidence type="ECO:0000269" key="2">
    <source>
    </source>
</evidence>
<evidence type="ECO:0000305" key="3"/>
<evidence type="ECO:0000312" key="4">
    <source>
        <dbReference type="MGI" id="MGI:2143657"/>
    </source>
</evidence>
<proteinExistence type="evidence at transcript level"/>
<sequence>MGARLGRRARADAPAAPSAGPAPYERRVRWLREIQSTLRERRPERARQLLRLLRQDLGLEGNLLTDILHRNVTFLNLVDPISHDLLVNLARDLQCPKKDHELWKSSDKICRQLIYHLTPHSKRKHHRKTQSSLKSSLQKTLLVGETVDLSGIPLSARDVQHISRYLDTRGVELVVLDLSFTELSDELLHLLLPSLWALPRLTQLLLNGNRLTRAAARELTEAIKDTAKFPVLAWVDLGNNVDVSSLPQPLLVGLRRRLSQHTSLPTIYEGLDLEPGGGMAETTAAVSTWGSAATEAGPEPQGCCAR</sequence>
<protein>
    <recommendedName>
        <fullName evidence="3">Leucine-rich repeat-containing protein 75B</fullName>
    </recommendedName>
    <alternativeName>
        <fullName>Leucine-rich repeat-containing protein FAM211B</fullName>
    </alternativeName>
</protein>
<comment type="function">
    <text evidence="2">May suppress myogenic differentiation by modulating MYOG expression and Erk1/2 signaling.</text>
</comment>
<comment type="induction">
    <text evidence="2">Markedly decreased during differentiation.</text>
</comment>
<comment type="similarity">
    <text evidence="3">Belongs to the LRRC75 family.</text>
</comment>
<dbReference type="EMBL" id="BC055322">
    <property type="protein sequence ID" value="AAH55322.1"/>
    <property type="molecule type" value="mRNA"/>
</dbReference>
<dbReference type="EMBL" id="BC056492">
    <property type="protein sequence ID" value="AAH56492.1"/>
    <property type="molecule type" value="mRNA"/>
</dbReference>
<dbReference type="EMBL" id="AK132309">
    <property type="protein sequence ID" value="BAE21096.1"/>
    <property type="molecule type" value="mRNA"/>
</dbReference>
<dbReference type="CCDS" id="CCDS35937.1"/>
<dbReference type="RefSeq" id="NP_942560.1">
    <property type="nucleotide sequence ID" value="NM_198860.2"/>
</dbReference>
<dbReference type="SMR" id="Q7TPD7"/>
<dbReference type="FunCoup" id="Q7TPD7">
    <property type="interactions" value="3"/>
</dbReference>
<dbReference type="STRING" id="10090.ENSMUSP00000053085"/>
<dbReference type="iPTMnet" id="Q7TPD7"/>
<dbReference type="PhosphoSitePlus" id="Q7TPD7"/>
<dbReference type="PaxDb" id="10090-ENSMUSP00000053085"/>
<dbReference type="ProteomicsDB" id="252497"/>
<dbReference type="Antibodypedia" id="265">
    <property type="antibodies" value="57 antibodies from 13 providers"/>
</dbReference>
<dbReference type="DNASU" id="192734"/>
<dbReference type="Ensembl" id="ENSMUST00000051129.10">
    <property type="protein sequence ID" value="ENSMUSP00000053085.10"/>
    <property type="gene ID" value="ENSMUSG00000046807.11"/>
</dbReference>
<dbReference type="GeneID" id="192734"/>
<dbReference type="KEGG" id="mmu:192734"/>
<dbReference type="UCSC" id="uc029qyw.1">
    <property type="organism name" value="mouse"/>
</dbReference>
<dbReference type="AGR" id="MGI:2143657"/>
<dbReference type="CTD" id="388886"/>
<dbReference type="MGI" id="MGI:2143657">
    <property type="gene designation" value="Lrrc75b"/>
</dbReference>
<dbReference type="VEuPathDB" id="HostDB:ENSMUSG00000046807"/>
<dbReference type="eggNOG" id="ENOG502QRJY">
    <property type="taxonomic scope" value="Eukaryota"/>
</dbReference>
<dbReference type="GeneTree" id="ENSGT00940000162815"/>
<dbReference type="HOGENOM" id="CLU_050536_2_0_1"/>
<dbReference type="InParanoid" id="Q7TPD7"/>
<dbReference type="OMA" id="SEPQACC"/>
<dbReference type="OrthoDB" id="9979103at2759"/>
<dbReference type="PhylomeDB" id="Q7TPD7"/>
<dbReference type="TreeFam" id="TF332831"/>
<dbReference type="BioGRID-ORCS" id="192734">
    <property type="hits" value="0 hits in 76 CRISPR screens"/>
</dbReference>
<dbReference type="PRO" id="PR:Q7TPD7"/>
<dbReference type="Proteomes" id="UP000000589">
    <property type="component" value="Chromosome 10"/>
</dbReference>
<dbReference type="RNAct" id="Q7TPD7">
    <property type="molecule type" value="protein"/>
</dbReference>
<dbReference type="Bgee" id="ENSMUSG00000046807">
    <property type="expression patterns" value="Expressed in vestibular membrane of cochlear duct and 158 other cell types or tissues"/>
</dbReference>
<dbReference type="ExpressionAtlas" id="Q7TPD7">
    <property type="expression patterns" value="baseline and differential"/>
</dbReference>
<dbReference type="Gene3D" id="3.80.10.10">
    <property type="entry name" value="Ribonuclease Inhibitor"/>
    <property type="match status" value="1"/>
</dbReference>
<dbReference type="InterPro" id="IPR032675">
    <property type="entry name" value="LRR_dom_sf"/>
</dbReference>
<dbReference type="PANTHER" id="PTHR39654">
    <property type="entry name" value="LEUCINE-RICH REPEAT-CONTAINING PROTEIN 75A-LIKE ISOFORM X1"/>
    <property type="match status" value="1"/>
</dbReference>
<dbReference type="PANTHER" id="PTHR39654:SF5">
    <property type="entry name" value="LEUCINE-RICH REPEAT-CONTAINING PROTEIN 75B"/>
    <property type="match status" value="1"/>
</dbReference>
<dbReference type="SUPFAM" id="SSF52047">
    <property type="entry name" value="RNI-like"/>
    <property type="match status" value="1"/>
</dbReference>
<name>LR75B_MOUSE</name>